<dbReference type="EC" id="5.3.1.9" evidence="1"/>
<dbReference type="EMBL" id="BX950229">
    <property type="protein sequence ID" value="CAF30851.1"/>
    <property type="molecule type" value="Genomic_DNA"/>
</dbReference>
<dbReference type="RefSeq" id="WP_011171239.1">
    <property type="nucleotide sequence ID" value="NC_005791.1"/>
</dbReference>
<dbReference type="SMR" id="Q6LXQ4"/>
<dbReference type="STRING" id="267377.MMP1295"/>
<dbReference type="EnsemblBacteria" id="CAF30851">
    <property type="protein sequence ID" value="CAF30851"/>
    <property type="gene ID" value="MMP1295"/>
</dbReference>
<dbReference type="GeneID" id="2761531"/>
<dbReference type="KEGG" id="mmp:MMP1295"/>
<dbReference type="PATRIC" id="fig|267377.15.peg.1328"/>
<dbReference type="eggNOG" id="arCOG00052">
    <property type="taxonomic scope" value="Archaea"/>
</dbReference>
<dbReference type="HOGENOM" id="CLU_037303_1_0_2"/>
<dbReference type="OrthoDB" id="168618at2157"/>
<dbReference type="UniPathway" id="UPA00109">
    <property type="reaction ID" value="UER00181"/>
</dbReference>
<dbReference type="UniPathway" id="UPA00138"/>
<dbReference type="Proteomes" id="UP000000590">
    <property type="component" value="Chromosome"/>
</dbReference>
<dbReference type="GO" id="GO:0005829">
    <property type="term" value="C:cytosol"/>
    <property type="evidence" value="ECO:0007669"/>
    <property type="project" value="TreeGrafter"/>
</dbReference>
<dbReference type="GO" id="GO:0097367">
    <property type="term" value="F:carbohydrate derivative binding"/>
    <property type="evidence" value="ECO:0007669"/>
    <property type="project" value="InterPro"/>
</dbReference>
<dbReference type="GO" id="GO:0004347">
    <property type="term" value="F:glucose-6-phosphate isomerase activity"/>
    <property type="evidence" value="ECO:0007669"/>
    <property type="project" value="UniProtKB-UniRule"/>
</dbReference>
<dbReference type="GO" id="GO:0048029">
    <property type="term" value="F:monosaccharide binding"/>
    <property type="evidence" value="ECO:0007669"/>
    <property type="project" value="TreeGrafter"/>
</dbReference>
<dbReference type="GO" id="GO:0006094">
    <property type="term" value="P:gluconeogenesis"/>
    <property type="evidence" value="ECO:0007669"/>
    <property type="project" value="UniProtKB-UniRule"/>
</dbReference>
<dbReference type="GO" id="GO:0051156">
    <property type="term" value="P:glucose 6-phosphate metabolic process"/>
    <property type="evidence" value="ECO:0007669"/>
    <property type="project" value="TreeGrafter"/>
</dbReference>
<dbReference type="GO" id="GO:0006096">
    <property type="term" value="P:glycolytic process"/>
    <property type="evidence" value="ECO:0007669"/>
    <property type="project" value="UniProtKB-UniRule"/>
</dbReference>
<dbReference type="CDD" id="cd05015">
    <property type="entry name" value="SIS_PGI_1"/>
    <property type="match status" value="1"/>
</dbReference>
<dbReference type="CDD" id="cd05016">
    <property type="entry name" value="SIS_PGI_2"/>
    <property type="match status" value="1"/>
</dbReference>
<dbReference type="Gene3D" id="3.40.50.10490">
    <property type="entry name" value="Glucose-6-phosphate isomerase like protein, domain 1"/>
    <property type="match status" value="2"/>
</dbReference>
<dbReference type="HAMAP" id="MF_00473">
    <property type="entry name" value="G6P_isomerase"/>
    <property type="match status" value="1"/>
</dbReference>
<dbReference type="InterPro" id="IPR001672">
    <property type="entry name" value="G6P_Isomerase"/>
</dbReference>
<dbReference type="InterPro" id="IPR053509">
    <property type="entry name" value="GPI"/>
</dbReference>
<dbReference type="InterPro" id="IPR018189">
    <property type="entry name" value="Phosphoglucose_isomerase_CS"/>
</dbReference>
<dbReference type="InterPro" id="IPR046348">
    <property type="entry name" value="SIS_dom_sf"/>
</dbReference>
<dbReference type="InterPro" id="IPR035476">
    <property type="entry name" value="SIS_PGI_1"/>
</dbReference>
<dbReference type="InterPro" id="IPR035482">
    <property type="entry name" value="SIS_PGI_2"/>
</dbReference>
<dbReference type="NCBIfam" id="NF040629">
    <property type="entry name" value="PGI_Meth"/>
    <property type="match status" value="1"/>
</dbReference>
<dbReference type="PANTHER" id="PTHR11469">
    <property type="entry name" value="GLUCOSE-6-PHOSPHATE ISOMERASE"/>
    <property type="match status" value="1"/>
</dbReference>
<dbReference type="PANTHER" id="PTHR11469:SF1">
    <property type="entry name" value="GLUCOSE-6-PHOSPHATE ISOMERASE"/>
    <property type="match status" value="1"/>
</dbReference>
<dbReference type="Pfam" id="PF00342">
    <property type="entry name" value="PGI"/>
    <property type="match status" value="1"/>
</dbReference>
<dbReference type="PRINTS" id="PR00662">
    <property type="entry name" value="G6PISOMERASE"/>
</dbReference>
<dbReference type="SUPFAM" id="SSF53697">
    <property type="entry name" value="SIS domain"/>
    <property type="match status" value="1"/>
</dbReference>
<dbReference type="PROSITE" id="PS00765">
    <property type="entry name" value="P_GLUCOSE_ISOMERASE_1"/>
    <property type="match status" value="1"/>
</dbReference>
<dbReference type="PROSITE" id="PS00174">
    <property type="entry name" value="P_GLUCOSE_ISOMERASE_2"/>
    <property type="match status" value="1"/>
</dbReference>
<dbReference type="PROSITE" id="PS51463">
    <property type="entry name" value="P_GLUCOSE_ISOMERASE_3"/>
    <property type="match status" value="1"/>
</dbReference>
<proteinExistence type="inferred from homology"/>
<accession>Q6LXQ4</accession>
<keyword id="KW-0963">Cytoplasm</keyword>
<keyword id="KW-0312">Gluconeogenesis</keyword>
<keyword id="KW-0324">Glycolysis</keyword>
<keyword id="KW-0413">Isomerase</keyword>
<keyword id="KW-1185">Reference proteome</keyword>
<reference key="1">
    <citation type="journal article" date="2004" name="J. Bacteriol.">
        <title>Complete genome sequence of the genetically tractable hydrogenotrophic methanogen Methanococcus maripaludis.</title>
        <authorList>
            <person name="Hendrickson E.L."/>
            <person name="Kaul R."/>
            <person name="Zhou Y."/>
            <person name="Bovee D."/>
            <person name="Chapman P."/>
            <person name="Chung J."/>
            <person name="Conway de Macario E."/>
            <person name="Dodsworth J.A."/>
            <person name="Gillett W."/>
            <person name="Graham D.E."/>
            <person name="Hackett M."/>
            <person name="Haydock A.K."/>
            <person name="Kang A."/>
            <person name="Land M.L."/>
            <person name="Levy R."/>
            <person name="Lie T.J."/>
            <person name="Major T.A."/>
            <person name="Moore B.C."/>
            <person name="Porat I."/>
            <person name="Palmeiri A."/>
            <person name="Rouse G."/>
            <person name="Saenphimmachak C."/>
            <person name="Soell D."/>
            <person name="Van Dien S."/>
            <person name="Wang T."/>
            <person name="Whitman W.B."/>
            <person name="Xia Q."/>
            <person name="Zhang Y."/>
            <person name="Larimer F.W."/>
            <person name="Olson M.V."/>
            <person name="Leigh J.A."/>
        </authorList>
    </citation>
    <scope>NUCLEOTIDE SEQUENCE [LARGE SCALE GENOMIC DNA]</scope>
    <source>
        <strain>DSM 14266 / JCM 13030 / NBRC 101832 / S2 / LL</strain>
    </source>
</reference>
<protein>
    <recommendedName>
        <fullName evidence="1">Probable glucose-6-phosphate isomerase</fullName>
        <shortName evidence="1">GPI</shortName>
        <ecNumber evidence="1">5.3.1.9</ecNumber>
    </recommendedName>
    <alternativeName>
        <fullName evidence="1">Phosphoglucose isomerase</fullName>
        <shortName evidence="1">PGI</shortName>
    </alternativeName>
    <alternativeName>
        <fullName evidence="1">Phosphohexose isomerase</fullName>
        <shortName evidence="1">PHI</shortName>
    </alternativeName>
</protein>
<gene>
    <name evidence="1" type="primary">pgi</name>
    <name type="ordered locus">MMP1295</name>
</gene>
<sequence>MNGELSFKYDNVMEENLGNLGISNGKLESFNNESSKIIEILKEKELNGEFGFLDVLNDNLDKYYELNEYSKNFENILIIGIGGSNLGLRAAETGILGSFTSRYEIPRIYYMDNSDPEKTHDILSNIDLEKTLVFVISKSGNTVETLANFFIVRNLMKKKNIDLEKHVVSITSGGELEKITKKENYIHFEVPENVGGRFSVLSSVGIAPLSCTSVDIKKLIDGAKSIEKSCKCEDIFKNPALMNAVIHKLMYNRGKTVSVMMPYIERLRSFGMWYGQLWAESLGKNGFGQTPVIAVGATSQHSQLQLYMDGPNDKIATFLKVNKYRNDLKIEYEYDHHLSGHNLSEVITSELVGTENSMKHNNIPNVKITLSKLNEITMGKLFLMYEMQTAISGELYGINAFDQPAVEYGKKIAHECLTGSKVDSENKYINGKYIITSK</sequence>
<comment type="function">
    <text evidence="1">Catalyzes the reversible isomerization of glucose-6-phosphate to fructose-6-phosphate.</text>
</comment>
<comment type="catalytic activity">
    <reaction evidence="1">
        <text>alpha-D-glucose 6-phosphate = beta-D-fructose 6-phosphate</text>
        <dbReference type="Rhea" id="RHEA:11816"/>
        <dbReference type="ChEBI" id="CHEBI:57634"/>
        <dbReference type="ChEBI" id="CHEBI:58225"/>
        <dbReference type="EC" id="5.3.1.9"/>
    </reaction>
</comment>
<comment type="pathway">
    <text evidence="1">Carbohydrate biosynthesis; gluconeogenesis.</text>
</comment>
<comment type="pathway">
    <text evidence="1">Carbohydrate degradation; glycolysis; D-glyceraldehyde 3-phosphate and glycerone phosphate from D-glucose: step 2/4.</text>
</comment>
<comment type="subcellular location">
    <subcellularLocation>
        <location evidence="1">Cytoplasm</location>
    </subcellularLocation>
</comment>
<comment type="similarity">
    <text evidence="1">Belongs to the GPI family.</text>
</comment>
<organism>
    <name type="scientific">Methanococcus maripaludis (strain DSM 14266 / JCM 13030 / NBRC 101832 / S2 / LL)</name>
    <dbReference type="NCBI Taxonomy" id="267377"/>
    <lineage>
        <taxon>Archaea</taxon>
        <taxon>Methanobacteriati</taxon>
        <taxon>Methanobacteriota</taxon>
        <taxon>Methanomada group</taxon>
        <taxon>Methanococci</taxon>
        <taxon>Methanococcales</taxon>
        <taxon>Methanococcaceae</taxon>
        <taxon>Methanococcus</taxon>
    </lineage>
</organism>
<feature type="chain" id="PRO_0000180781" description="Probable glucose-6-phosphate isomerase">
    <location>
        <begin position="1"/>
        <end position="438"/>
    </location>
</feature>
<feature type="active site" description="Proton donor" evidence="1">
    <location>
        <position position="280"/>
    </location>
</feature>
<feature type="active site" evidence="1">
    <location>
        <position position="301"/>
    </location>
</feature>
<feature type="active site" evidence="1">
    <location>
        <position position="410"/>
    </location>
</feature>
<evidence type="ECO:0000255" key="1">
    <source>
        <dbReference type="HAMAP-Rule" id="MF_00473"/>
    </source>
</evidence>
<name>G6PI_METMP</name>